<feature type="chain" id="PRO_1000066708" description="Acyl carrier protein">
    <location>
        <begin position="1"/>
        <end position="80"/>
    </location>
</feature>
<feature type="domain" description="Carrier" evidence="2">
    <location>
        <begin position="4"/>
        <end position="79"/>
    </location>
</feature>
<feature type="modified residue" description="O-(pantetheine 4'-phosphoryl)serine" evidence="2">
    <location>
        <position position="39"/>
    </location>
</feature>
<protein>
    <recommendedName>
        <fullName evidence="1">Acyl carrier protein</fullName>
        <shortName evidence="1">ACP</shortName>
    </recommendedName>
</protein>
<evidence type="ECO:0000255" key="1">
    <source>
        <dbReference type="HAMAP-Rule" id="MF_01217"/>
    </source>
</evidence>
<evidence type="ECO:0000255" key="2">
    <source>
        <dbReference type="PROSITE-ProRule" id="PRU00258"/>
    </source>
</evidence>
<name>ACP_SYNPW</name>
<accession>A5GI58</accession>
<dbReference type="EMBL" id="CT971583">
    <property type="protein sequence ID" value="CAK22623.1"/>
    <property type="molecule type" value="Genomic_DNA"/>
</dbReference>
<dbReference type="SMR" id="A5GI58"/>
<dbReference type="STRING" id="32051.SynWH7803_0197"/>
<dbReference type="KEGG" id="syx:SynWH7803_0197"/>
<dbReference type="eggNOG" id="COG0236">
    <property type="taxonomic scope" value="Bacteria"/>
</dbReference>
<dbReference type="HOGENOM" id="CLU_108696_5_1_3"/>
<dbReference type="OrthoDB" id="9804551at2"/>
<dbReference type="UniPathway" id="UPA00094"/>
<dbReference type="Proteomes" id="UP000001566">
    <property type="component" value="Chromosome"/>
</dbReference>
<dbReference type="GO" id="GO:0005829">
    <property type="term" value="C:cytosol"/>
    <property type="evidence" value="ECO:0007669"/>
    <property type="project" value="TreeGrafter"/>
</dbReference>
<dbReference type="GO" id="GO:0016020">
    <property type="term" value="C:membrane"/>
    <property type="evidence" value="ECO:0007669"/>
    <property type="project" value="GOC"/>
</dbReference>
<dbReference type="GO" id="GO:0000035">
    <property type="term" value="F:acyl binding"/>
    <property type="evidence" value="ECO:0007669"/>
    <property type="project" value="TreeGrafter"/>
</dbReference>
<dbReference type="GO" id="GO:0000036">
    <property type="term" value="F:acyl carrier activity"/>
    <property type="evidence" value="ECO:0007669"/>
    <property type="project" value="UniProtKB-UniRule"/>
</dbReference>
<dbReference type="GO" id="GO:0031177">
    <property type="term" value="F:phosphopantetheine binding"/>
    <property type="evidence" value="ECO:0007669"/>
    <property type="project" value="InterPro"/>
</dbReference>
<dbReference type="GO" id="GO:0009245">
    <property type="term" value="P:lipid A biosynthetic process"/>
    <property type="evidence" value="ECO:0007669"/>
    <property type="project" value="TreeGrafter"/>
</dbReference>
<dbReference type="FunFam" id="1.10.1200.10:FF:000006">
    <property type="entry name" value="Acyl carrier protein"/>
    <property type="match status" value="1"/>
</dbReference>
<dbReference type="Gene3D" id="1.10.1200.10">
    <property type="entry name" value="ACP-like"/>
    <property type="match status" value="1"/>
</dbReference>
<dbReference type="HAMAP" id="MF_01217">
    <property type="entry name" value="Acyl_carrier"/>
    <property type="match status" value="1"/>
</dbReference>
<dbReference type="InterPro" id="IPR003231">
    <property type="entry name" value="ACP"/>
</dbReference>
<dbReference type="InterPro" id="IPR036736">
    <property type="entry name" value="ACP-like_sf"/>
</dbReference>
<dbReference type="InterPro" id="IPR020806">
    <property type="entry name" value="PKS_PP-bd"/>
</dbReference>
<dbReference type="InterPro" id="IPR009081">
    <property type="entry name" value="PP-bd_ACP"/>
</dbReference>
<dbReference type="InterPro" id="IPR006162">
    <property type="entry name" value="Ppantetheine_attach_site"/>
</dbReference>
<dbReference type="NCBIfam" id="TIGR00517">
    <property type="entry name" value="acyl_carrier"/>
    <property type="match status" value="1"/>
</dbReference>
<dbReference type="NCBIfam" id="NF002148">
    <property type="entry name" value="PRK00982.1-2"/>
    <property type="match status" value="1"/>
</dbReference>
<dbReference type="NCBIfam" id="NF002149">
    <property type="entry name" value="PRK00982.1-3"/>
    <property type="match status" value="1"/>
</dbReference>
<dbReference type="NCBIfam" id="NF002150">
    <property type="entry name" value="PRK00982.1-4"/>
    <property type="match status" value="1"/>
</dbReference>
<dbReference type="NCBIfam" id="NF002151">
    <property type="entry name" value="PRK00982.1-5"/>
    <property type="match status" value="1"/>
</dbReference>
<dbReference type="NCBIfam" id="NF009104">
    <property type="entry name" value="PRK12449.1"/>
    <property type="match status" value="1"/>
</dbReference>
<dbReference type="PANTHER" id="PTHR20863">
    <property type="entry name" value="ACYL CARRIER PROTEIN"/>
    <property type="match status" value="1"/>
</dbReference>
<dbReference type="PANTHER" id="PTHR20863:SF76">
    <property type="entry name" value="CARRIER DOMAIN-CONTAINING PROTEIN"/>
    <property type="match status" value="1"/>
</dbReference>
<dbReference type="Pfam" id="PF00550">
    <property type="entry name" value="PP-binding"/>
    <property type="match status" value="1"/>
</dbReference>
<dbReference type="SMART" id="SM00823">
    <property type="entry name" value="PKS_PP"/>
    <property type="match status" value="1"/>
</dbReference>
<dbReference type="SUPFAM" id="SSF47336">
    <property type="entry name" value="ACP-like"/>
    <property type="match status" value="1"/>
</dbReference>
<dbReference type="PROSITE" id="PS50075">
    <property type="entry name" value="CARRIER"/>
    <property type="match status" value="1"/>
</dbReference>
<dbReference type="PROSITE" id="PS00012">
    <property type="entry name" value="PHOSPHOPANTETHEINE"/>
    <property type="match status" value="1"/>
</dbReference>
<sequence length="80" mass="8641">MSQEAILEKVRSIVAEQLSVDAGEVKPESNFQNDLGADSLDTVELVMALEEAFDIEIPDEAAEGITTVGDAVKYIEDKQA</sequence>
<proteinExistence type="inferred from homology"/>
<gene>
    <name evidence="1" type="primary">acpP</name>
    <name type="ordered locus">SynWH7803_0197</name>
</gene>
<keyword id="KW-0963">Cytoplasm</keyword>
<keyword id="KW-0275">Fatty acid biosynthesis</keyword>
<keyword id="KW-0276">Fatty acid metabolism</keyword>
<keyword id="KW-0444">Lipid biosynthesis</keyword>
<keyword id="KW-0443">Lipid metabolism</keyword>
<keyword id="KW-0596">Phosphopantetheine</keyword>
<keyword id="KW-0597">Phosphoprotein</keyword>
<keyword id="KW-1185">Reference proteome</keyword>
<comment type="function">
    <text evidence="1">Carrier of the growing fatty acid chain in fatty acid biosynthesis.</text>
</comment>
<comment type="pathway">
    <text evidence="1">Lipid metabolism; fatty acid biosynthesis.</text>
</comment>
<comment type="subcellular location">
    <subcellularLocation>
        <location evidence="1">Cytoplasm</location>
    </subcellularLocation>
</comment>
<comment type="PTM">
    <text evidence="1">4'-phosphopantetheine is transferred from CoA to a specific serine of apo-ACP by AcpS. This modification is essential for activity because fatty acids are bound in thioester linkage to the sulfhydryl of the prosthetic group.</text>
</comment>
<comment type="similarity">
    <text evidence="1">Belongs to the acyl carrier protein (ACP) family.</text>
</comment>
<reference key="1">
    <citation type="submission" date="2006-05" db="EMBL/GenBank/DDBJ databases">
        <authorList>
            <consortium name="Genoscope"/>
        </authorList>
    </citation>
    <scope>NUCLEOTIDE SEQUENCE [LARGE SCALE GENOMIC DNA]</scope>
    <source>
        <strain>WH7803</strain>
    </source>
</reference>
<organism>
    <name type="scientific">Synechococcus sp. (strain WH7803)</name>
    <dbReference type="NCBI Taxonomy" id="32051"/>
    <lineage>
        <taxon>Bacteria</taxon>
        <taxon>Bacillati</taxon>
        <taxon>Cyanobacteriota</taxon>
        <taxon>Cyanophyceae</taxon>
        <taxon>Synechococcales</taxon>
        <taxon>Synechococcaceae</taxon>
        <taxon>Synechococcus</taxon>
    </lineage>
</organism>